<keyword id="KW-0002">3D-structure</keyword>
<keyword id="KW-0051">Antiviral defense</keyword>
<keyword id="KW-0238">DNA-binding</keyword>
<keyword id="KW-0255">Endonuclease</keyword>
<keyword id="KW-0378">Hydrolase</keyword>
<keyword id="KW-0460">Magnesium</keyword>
<keyword id="KW-0464">Manganese</keyword>
<keyword id="KW-0479">Metal-binding</keyword>
<keyword id="KW-0540">Nuclease</keyword>
<accession>O58938</accession>
<feature type="chain" id="PRO_0000417109" description="CRISPR-associated endonuclease Cas1">
    <location>
        <begin position="1"/>
        <end position="322"/>
    </location>
</feature>
<feature type="binding site" evidence="1">
    <location>
        <position position="149"/>
    </location>
    <ligand>
        <name>Mn(2+)</name>
        <dbReference type="ChEBI" id="CHEBI:29035"/>
    </ligand>
</feature>
<feature type="binding site" evidence="1">
    <location>
        <position position="214"/>
    </location>
    <ligand>
        <name>Mn(2+)</name>
        <dbReference type="ChEBI" id="CHEBI:29035"/>
    </ligand>
</feature>
<feature type="binding site" evidence="1">
    <location>
        <position position="229"/>
    </location>
    <ligand>
        <name>Mn(2+)</name>
        <dbReference type="ChEBI" id="CHEBI:29035"/>
    </ligand>
</feature>
<feature type="strand" evidence="2">
    <location>
        <begin position="4"/>
        <end position="8"/>
    </location>
</feature>
<feature type="strand" evidence="2">
    <location>
        <begin position="12"/>
        <end position="17"/>
    </location>
</feature>
<feature type="strand" evidence="2">
    <location>
        <begin position="20"/>
        <end position="27"/>
    </location>
</feature>
<feature type="strand" evidence="2">
    <location>
        <begin position="30"/>
        <end position="32"/>
    </location>
</feature>
<feature type="strand" evidence="2">
    <location>
        <begin position="37"/>
        <end position="42"/>
    </location>
</feature>
<feature type="strand" evidence="2">
    <location>
        <begin position="46"/>
        <end position="48"/>
    </location>
</feature>
<feature type="helix" evidence="2">
    <location>
        <begin position="50"/>
        <end position="58"/>
    </location>
</feature>
<feature type="strand" evidence="2">
    <location>
        <begin position="62"/>
        <end position="66"/>
    </location>
</feature>
<feature type="strand" evidence="2">
    <location>
        <begin position="72"/>
        <end position="78"/>
    </location>
</feature>
<feature type="helix" evidence="2">
    <location>
        <begin position="85"/>
        <end position="96"/>
    </location>
</feature>
<feature type="helix" evidence="2">
    <location>
        <begin position="98"/>
        <end position="122"/>
    </location>
</feature>
<feature type="helix" evidence="2">
    <location>
        <begin position="129"/>
        <end position="132"/>
    </location>
</feature>
<feature type="helix" evidence="2">
    <location>
        <begin position="133"/>
        <end position="138"/>
    </location>
</feature>
<feature type="helix" evidence="2">
    <location>
        <begin position="142"/>
        <end position="160"/>
    </location>
</feature>
<feature type="helix" evidence="2">
    <location>
        <begin position="161"/>
        <end position="163"/>
    </location>
</feature>
<feature type="helix" evidence="2">
    <location>
        <begin position="166"/>
        <end position="168"/>
    </location>
</feature>
<feature type="helix" evidence="2">
    <location>
        <begin position="181"/>
        <end position="202"/>
    </location>
</feature>
<feature type="strand" evidence="2">
    <location>
        <begin position="204"/>
        <end position="206"/>
    </location>
</feature>
<feature type="strand" evidence="2">
    <location>
        <begin position="212"/>
        <end position="214"/>
    </location>
</feature>
<feature type="helix" evidence="2">
    <location>
        <begin position="222"/>
        <end position="234"/>
    </location>
</feature>
<feature type="helix" evidence="2">
    <location>
        <begin position="236"/>
        <end position="245"/>
    </location>
</feature>
<feature type="helix" evidence="2">
    <location>
        <begin position="251"/>
        <end position="253"/>
    </location>
</feature>
<feature type="strand" evidence="2">
    <location>
        <begin position="254"/>
        <end position="256"/>
    </location>
</feature>
<feature type="strand" evidence="2">
    <location>
        <begin position="261"/>
        <end position="263"/>
    </location>
</feature>
<feature type="helix" evidence="2">
    <location>
        <begin position="265"/>
        <end position="279"/>
    </location>
</feature>
<feature type="turn" evidence="2">
    <location>
        <begin position="286"/>
        <end position="288"/>
    </location>
</feature>
<feature type="helix" evidence="2">
    <location>
        <begin position="294"/>
        <end position="309"/>
    </location>
</feature>
<gene>
    <name evidence="1" type="primary">cas1</name>
    <name type="ordered locus">PH1245</name>
</gene>
<name>CAS1_PYRHO</name>
<proteinExistence type="evidence at protein level"/>
<dbReference type="EC" id="3.1.-.-" evidence="1"/>
<dbReference type="EMBL" id="BA000001">
    <property type="protein sequence ID" value="BAA30345.1"/>
    <property type="molecule type" value="Genomic_DNA"/>
</dbReference>
<dbReference type="PIR" id="G71068">
    <property type="entry name" value="G71068"/>
</dbReference>
<dbReference type="RefSeq" id="WP_010885333.1">
    <property type="nucleotide sequence ID" value="NC_000961.1"/>
</dbReference>
<dbReference type="PDB" id="4WJ0">
    <property type="method" value="X-ray"/>
    <property type="resolution" value="2.85 A"/>
    <property type="chains" value="A/B=1-322"/>
</dbReference>
<dbReference type="PDBsum" id="4WJ0"/>
<dbReference type="SMR" id="O58938"/>
<dbReference type="STRING" id="70601.gene:9378207"/>
<dbReference type="EnsemblBacteria" id="BAA30345">
    <property type="protein sequence ID" value="BAA30345"/>
    <property type="gene ID" value="BAA30345"/>
</dbReference>
<dbReference type="GeneID" id="1443568"/>
<dbReference type="KEGG" id="pho:PH1245"/>
<dbReference type="eggNOG" id="arCOG01452">
    <property type="taxonomic scope" value="Archaea"/>
</dbReference>
<dbReference type="OrthoDB" id="2216at2157"/>
<dbReference type="EvolutionaryTrace" id="O58938"/>
<dbReference type="Proteomes" id="UP000000752">
    <property type="component" value="Chromosome"/>
</dbReference>
<dbReference type="GO" id="GO:0003677">
    <property type="term" value="F:DNA binding"/>
    <property type="evidence" value="ECO:0007669"/>
    <property type="project" value="UniProtKB-KW"/>
</dbReference>
<dbReference type="GO" id="GO:0004520">
    <property type="term" value="F:DNA endonuclease activity"/>
    <property type="evidence" value="ECO:0007669"/>
    <property type="project" value="InterPro"/>
</dbReference>
<dbReference type="GO" id="GO:0046872">
    <property type="term" value="F:metal ion binding"/>
    <property type="evidence" value="ECO:0007669"/>
    <property type="project" value="UniProtKB-UniRule"/>
</dbReference>
<dbReference type="GO" id="GO:0051607">
    <property type="term" value="P:defense response to virus"/>
    <property type="evidence" value="ECO:0007669"/>
    <property type="project" value="UniProtKB-UniRule"/>
</dbReference>
<dbReference type="GO" id="GO:0043571">
    <property type="term" value="P:maintenance of CRISPR repeat elements"/>
    <property type="evidence" value="ECO:0007669"/>
    <property type="project" value="UniProtKB-UniRule"/>
</dbReference>
<dbReference type="CDD" id="cd09722">
    <property type="entry name" value="Cas1_I-B"/>
    <property type="match status" value="1"/>
</dbReference>
<dbReference type="Gene3D" id="1.20.120.920">
    <property type="entry name" value="CRISPR-associated endonuclease Cas1, C-terminal domain"/>
    <property type="match status" value="1"/>
</dbReference>
<dbReference type="Gene3D" id="3.100.10.20">
    <property type="entry name" value="CRISPR-associated endonuclease Cas1, N-terminal domain"/>
    <property type="match status" value="1"/>
</dbReference>
<dbReference type="HAMAP" id="MF_01470">
    <property type="entry name" value="Cas1"/>
    <property type="match status" value="1"/>
</dbReference>
<dbReference type="InterPro" id="IPR002729">
    <property type="entry name" value="CRISPR-assoc_Cas1"/>
</dbReference>
<dbReference type="InterPro" id="IPR042206">
    <property type="entry name" value="CRISPR-assoc_Cas1_C"/>
</dbReference>
<dbReference type="InterPro" id="IPR019858">
    <property type="entry name" value="CRISPR-assoc_Cas1_HMARI/TNEAP"/>
</dbReference>
<dbReference type="InterPro" id="IPR042211">
    <property type="entry name" value="CRISPR-assoc_Cas1_N"/>
</dbReference>
<dbReference type="NCBIfam" id="TIGR00287">
    <property type="entry name" value="cas1"/>
    <property type="match status" value="1"/>
</dbReference>
<dbReference type="NCBIfam" id="TIGR03641">
    <property type="entry name" value="cas1_HMARI"/>
    <property type="match status" value="1"/>
</dbReference>
<dbReference type="PANTHER" id="PTHR43219">
    <property type="entry name" value="CRISPR-ASSOCIATED ENDONUCLEASE CAS1"/>
    <property type="match status" value="1"/>
</dbReference>
<dbReference type="PANTHER" id="PTHR43219:SF2">
    <property type="entry name" value="CRISPR-ASSOCIATED ENDONUCLEASE CAS1"/>
    <property type="match status" value="1"/>
</dbReference>
<dbReference type="Pfam" id="PF01867">
    <property type="entry name" value="Cas_Cas1"/>
    <property type="match status" value="1"/>
</dbReference>
<organism>
    <name type="scientific">Pyrococcus horikoshii (strain ATCC 700860 / DSM 12428 / JCM 9974 / NBRC 100139 / OT-3)</name>
    <dbReference type="NCBI Taxonomy" id="70601"/>
    <lineage>
        <taxon>Archaea</taxon>
        <taxon>Methanobacteriati</taxon>
        <taxon>Methanobacteriota</taxon>
        <taxon>Thermococci</taxon>
        <taxon>Thermococcales</taxon>
        <taxon>Thermococcaceae</taxon>
        <taxon>Pyrococcus</taxon>
    </lineage>
</organism>
<evidence type="ECO:0000255" key="1">
    <source>
        <dbReference type="HAMAP-Rule" id="MF_01470"/>
    </source>
</evidence>
<evidence type="ECO:0007829" key="2">
    <source>
        <dbReference type="PDB" id="4WJ0"/>
    </source>
</evidence>
<reference key="1">
    <citation type="journal article" date="1998" name="DNA Res.">
        <title>Complete sequence and gene organization of the genome of a hyper-thermophilic archaebacterium, Pyrococcus horikoshii OT3.</title>
        <authorList>
            <person name="Kawarabayasi Y."/>
            <person name="Sawada M."/>
            <person name="Horikawa H."/>
            <person name="Haikawa Y."/>
            <person name="Hino Y."/>
            <person name="Yamamoto S."/>
            <person name="Sekine M."/>
            <person name="Baba S."/>
            <person name="Kosugi H."/>
            <person name="Hosoyama A."/>
            <person name="Nagai Y."/>
            <person name="Sakai M."/>
            <person name="Ogura K."/>
            <person name="Otsuka R."/>
            <person name="Nakazawa H."/>
            <person name="Takamiya M."/>
            <person name="Ohfuku Y."/>
            <person name="Funahashi T."/>
            <person name="Tanaka T."/>
            <person name="Kudoh Y."/>
            <person name="Yamazaki J."/>
            <person name="Kushida N."/>
            <person name="Oguchi A."/>
            <person name="Aoki K."/>
            <person name="Yoshizawa T."/>
            <person name="Nakamura Y."/>
            <person name="Robb F.T."/>
            <person name="Horikoshi K."/>
            <person name="Masuchi Y."/>
            <person name="Shizuya H."/>
            <person name="Kikuchi H."/>
        </authorList>
    </citation>
    <scope>NUCLEOTIDE SEQUENCE [LARGE SCALE GENOMIC DNA]</scope>
    <source>
        <strain>ATCC 700860 / DSM 12428 / JCM 9974 / NBRC 100139 / OT-3</strain>
    </source>
</reference>
<reference key="2">
    <citation type="submission" date="2010-12" db="PDB data bank">
        <title>Structure determination and overall comparison of three Cas1 proteins.</title>
        <authorList>
            <person name="Petit P."/>
            <person name="Brown G."/>
            <person name="Savchenko A."/>
            <person name="Yakunin A.F."/>
        </authorList>
    </citation>
    <scope>X-RAY CRYSTALLOGRAPHY (2.85 ANGSTROMS)</scope>
    <scope>SUBUNIT</scope>
</reference>
<protein>
    <recommendedName>
        <fullName evidence="1">CRISPR-associated endonuclease Cas1</fullName>
        <ecNumber evidence="1">3.1.-.-</ecNumber>
    </recommendedName>
</protein>
<sequence length="322" mass="37755">MRKKPLTIFSDGTLTRRENTLYFESAKGRKPLAIEGIYDIYIYGHVNITSQALHYIAQKGILIHFFNHYGYYDGTFYPRETLLSGDLIIRQAEHYLNKEKRLFLAKSFVTGGTKNMERNLKNWGIKAKLSDYLDELNDARKITEIMNVEARIRQEYYAKWDENLPEEFKIVKRTRRPPKNEMNALISFLNSRLYATIITEIYNTQLAPTISYLHEPSERRFSLSLDLSEIFKPIIADRVANRLVKKGSLKKEHFREDLNGVLLTEEGMKIVTKAYNEELQKSVKHPKIGSNVTRQRLIRLEAYKLIKHLVGVEEYKPLVAWF</sequence>
<comment type="function">
    <text evidence="1">CRISPR (clustered regularly interspaced short palindromic repeat), is an adaptive immune system that provides protection against mobile genetic elements (viruses, transposable elements and conjugative plasmids). CRISPR clusters contain spacers, sequences complementary to antecedent mobile elements, and target invading nucleic acids. CRISPR clusters are transcribed and processed into CRISPR RNA (crRNA). Acts as a dsDNA endonuclease. Involved in the integration of spacer DNA into the CRISPR cassette.</text>
</comment>
<comment type="cofactor">
    <cofactor evidence="1">
        <name>Mg(2+)</name>
        <dbReference type="ChEBI" id="CHEBI:18420"/>
    </cofactor>
    <cofactor evidence="1">
        <name>Mn(2+)</name>
        <dbReference type="ChEBI" id="CHEBI:29035"/>
    </cofactor>
</comment>
<comment type="subunit">
    <text evidence="1">Homodimer, forms a heterotetramer with a Cas2 homodimer.</text>
</comment>
<comment type="similarity">
    <text evidence="1">Belongs to the CRISPR-associated endonuclease Cas1 family.</text>
</comment>